<organism>
    <name type="scientific">Microcystis aeruginosa (strain NIES-843 / IAM M-2473)</name>
    <dbReference type="NCBI Taxonomy" id="449447"/>
    <lineage>
        <taxon>Bacteria</taxon>
        <taxon>Bacillati</taxon>
        <taxon>Cyanobacteriota</taxon>
        <taxon>Cyanophyceae</taxon>
        <taxon>Oscillatoriophycideae</taxon>
        <taxon>Chroococcales</taxon>
        <taxon>Microcystaceae</taxon>
        <taxon>Microcystis</taxon>
    </lineage>
</organism>
<feature type="chain" id="PRO_1000191290" description="Cell division topological specificity factor">
    <location>
        <begin position="1"/>
        <end position="95"/>
    </location>
</feature>
<keyword id="KW-0131">Cell cycle</keyword>
<keyword id="KW-0132">Cell division</keyword>
<accession>B0JPY2</accession>
<name>MINE_MICAN</name>
<comment type="function">
    <text evidence="1">Prevents the cell division inhibition by proteins MinC and MinD at internal division sites while permitting inhibition at polar sites. This ensures cell division at the proper site by restricting the formation of a division septum at the midpoint of the long axis of the cell.</text>
</comment>
<comment type="similarity">
    <text evidence="1">Belongs to the MinE family.</text>
</comment>
<proteinExistence type="inferred from homology"/>
<dbReference type="EMBL" id="AP009552">
    <property type="protein sequence ID" value="BAG03706.1"/>
    <property type="molecule type" value="Genomic_DNA"/>
</dbReference>
<dbReference type="RefSeq" id="WP_002797078.1">
    <property type="nucleotide sequence ID" value="NC_010296.1"/>
</dbReference>
<dbReference type="SMR" id="B0JPY2"/>
<dbReference type="STRING" id="449447.MAE_38840"/>
<dbReference type="PaxDb" id="449447-MAE_38840"/>
<dbReference type="EnsemblBacteria" id="BAG03706">
    <property type="protein sequence ID" value="BAG03706"/>
    <property type="gene ID" value="MAE_38840"/>
</dbReference>
<dbReference type="KEGG" id="mar:MAE_38840"/>
<dbReference type="eggNOG" id="COG0851">
    <property type="taxonomic scope" value="Bacteria"/>
</dbReference>
<dbReference type="HOGENOM" id="CLU_137929_1_1_3"/>
<dbReference type="BioCyc" id="MAER449447:MAE_RS16785-MONOMER"/>
<dbReference type="Proteomes" id="UP000001510">
    <property type="component" value="Chromosome"/>
</dbReference>
<dbReference type="GO" id="GO:0051301">
    <property type="term" value="P:cell division"/>
    <property type="evidence" value="ECO:0007669"/>
    <property type="project" value="UniProtKB-KW"/>
</dbReference>
<dbReference type="GO" id="GO:0032955">
    <property type="term" value="P:regulation of division septum assembly"/>
    <property type="evidence" value="ECO:0007669"/>
    <property type="project" value="InterPro"/>
</dbReference>
<dbReference type="Gene3D" id="3.30.1070.10">
    <property type="entry name" value="Cell division topological specificity factor MinE"/>
    <property type="match status" value="1"/>
</dbReference>
<dbReference type="HAMAP" id="MF_00262">
    <property type="entry name" value="MinE"/>
    <property type="match status" value="1"/>
</dbReference>
<dbReference type="InterPro" id="IPR005527">
    <property type="entry name" value="MinE"/>
</dbReference>
<dbReference type="InterPro" id="IPR036707">
    <property type="entry name" value="MinE_sf"/>
</dbReference>
<dbReference type="NCBIfam" id="TIGR01215">
    <property type="entry name" value="minE"/>
    <property type="match status" value="1"/>
</dbReference>
<dbReference type="Pfam" id="PF03776">
    <property type="entry name" value="MinE"/>
    <property type="match status" value="1"/>
</dbReference>
<dbReference type="SUPFAM" id="SSF55229">
    <property type="entry name" value="Cell division protein MinE topological specificity domain"/>
    <property type="match status" value="1"/>
</dbReference>
<evidence type="ECO:0000255" key="1">
    <source>
        <dbReference type="HAMAP-Rule" id="MF_00262"/>
    </source>
</evidence>
<reference key="1">
    <citation type="journal article" date="2007" name="DNA Res.">
        <title>Complete genomic structure of the bloom-forming toxic cyanobacterium Microcystis aeruginosa NIES-843.</title>
        <authorList>
            <person name="Kaneko T."/>
            <person name="Nakajima N."/>
            <person name="Okamoto S."/>
            <person name="Suzuki I."/>
            <person name="Tanabe Y."/>
            <person name="Tamaoki M."/>
            <person name="Nakamura Y."/>
            <person name="Kasai F."/>
            <person name="Watanabe A."/>
            <person name="Kawashima K."/>
            <person name="Kishida Y."/>
            <person name="Ono A."/>
            <person name="Shimizu Y."/>
            <person name="Takahashi C."/>
            <person name="Minami C."/>
            <person name="Fujishiro T."/>
            <person name="Kohara M."/>
            <person name="Katoh M."/>
            <person name="Nakazaki N."/>
            <person name="Nakayama S."/>
            <person name="Yamada M."/>
            <person name="Tabata S."/>
            <person name="Watanabe M.M."/>
        </authorList>
    </citation>
    <scope>NUCLEOTIDE SEQUENCE [LARGE SCALE GENOMIC DNA]</scope>
    <source>
        <strain>NIES-843 / IAM M-247</strain>
    </source>
</reference>
<sequence length="95" mass="10969">MNDLIDKLLAWRGSGKSGDQAKKRLKLILAHDRADLSPELLSMMRQEILEVVGRYLDIDTEETELLLESDQRTTALIANFPIRRIKRRPLTEKLP</sequence>
<gene>
    <name evidence="1" type="primary">minE</name>
    <name type="ordered locus">MAE_38840</name>
</gene>
<protein>
    <recommendedName>
        <fullName evidence="1">Cell division topological specificity factor</fullName>
    </recommendedName>
</protein>